<reference key="1">
    <citation type="journal article" date="2006" name="Nat. Genet.">
        <title>The multidrug-resistant human pathogen Clostridium difficile has a highly mobile, mosaic genome.</title>
        <authorList>
            <person name="Sebaihia M."/>
            <person name="Wren B.W."/>
            <person name="Mullany P."/>
            <person name="Fairweather N.F."/>
            <person name="Minton N."/>
            <person name="Stabler R."/>
            <person name="Thomson N.R."/>
            <person name="Roberts A.P."/>
            <person name="Cerdeno-Tarraga A.M."/>
            <person name="Wang H."/>
            <person name="Holden M.T.G."/>
            <person name="Wright A."/>
            <person name="Churcher C."/>
            <person name="Quail M.A."/>
            <person name="Baker S."/>
            <person name="Bason N."/>
            <person name="Brooks K."/>
            <person name="Chillingworth T."/>
            <person name="Cronin A."/>
            <person name="Davis P."/>
            <person name="Dowd L."/>
            <person name="Fraser A."/>
            <person name="Feltwell T."/>
            <person name="Hance Z."/>
            <person name="Holroyd S."/>
            <person name="Jagels K."/>
            <person name="Moule S."/>
            <person name="Mungall K."/>
            <person name="Price C."/>
            <person name="Rabbinowitsch E."/>
            <person name="Sharp S."/>
            <person name="Simmonds M."/>
            <person name="Stevens K."/>
            <person name="Unwin L."/>
            <person name="Whithead S."/>
            <person name="Dupuy B."/>
            <person name="Dougan G."/>
            <person name="Barrell B."/>
            <person name="Parkhill J."/>
        </authorList>
    </citation>
    <scope>NUCLEOTIDE SEQUENCE [LARGE SCALE GENOMIC DNA]</scope>
    <source>
        <strain>630</strain>
    </source>
</reference>
<proteinExistence type="inferred from homology"/>
<comment type="function">
    <text evidence="1">Catalyzes the rearrangement of 1-deoxy-D-xylulose 5-phosphate (DXP) to produce the thiazole phosphate moiety of thiamine. Sulfur is provided by the thiocarboxylate moiety of the carrier protein ThiS. In vitro, sulfur can be provided by H(2)S.</text>
</comment>
<comment type="catalytic activity">
    <reaction evidence="1">
        <text>[ThiS sulfur-carrier protein]-C-terminal-Gly-aminoethanethioate + 2-iminoacetate + 1-deoxy-D-xylulose 5-phosphate = [ThiS sulfur-carrier protein]-C-terminal Gly-Gly + 2-[(2R,5Z)-2-carboxy-4-methylthiazol-5(2H)-ylidene]ethyl phosphate + 2 H2O + H(+)</text>
        <dbReference type="Rhea" id="RHEA:26297"/>
        <dbReference type="Rhea" id="RHEA-COMP:12909"/>
        <dbReference type="Rhea" id="RHEA-COMP:19908"/>
        <dbReference type="ChEBI" id="CHEBI:15377"/>
        <dbReference type="ChEBI" id="CHEBI:15378"/>
        <dbReference type="ChEBI" id="CHEBI:57792"/>
        <dbReference type="ChEBI" id="CHEBI:62899"/>
        <dbReference type="ChEBI" id="CHEBI:77846"/>
        <dbReference type="ChEBI" id="CHEBI:90778"/>
        <dbReference type="ChEBI" id="CHEBI:232372"/>
        <dbReference type="EC" id="2.8.1.10"/>
    </reaction>
</comment>
<comment type="pathway">
    <text evidence="1">Cofactor biosynthesis; thiamine diphosphate biosynthesis.</text>
</comment>
<comment type="subunit">
    <text evidence="1">Homotetramer. Forms heterodimers with either ThiH or ThiS.</text>
</comment>
<comment type="subcellular location">
    <subcellularLocation>
        <location evidence="1">Cytoplasm</location>
    </subcellularLocation>
</comment>
<comment type="similarity">
    <text evidence="1">Belongs to the ThiG family.</text>
</comment>
<evidence type="ECO:0000255" key="1">
    <source>
        <dbReference type="HAMAP-Rule" id="MF_00443"/>
    </source>
</evidence>
<keyword id="KW-0963">Cytoplasm</keyword>
<keyword id="KW-1185">Reference proteome</keyword>
<keyword id="KW-0704">Schiff base</keyword>
<keyword id="KW-0784">Thiamine biosynthesis</keyword>
<keyword id="KW-0808">Transferase</keyword>
<sequence length="256" mass="27558">MDKLVLGGHEFNSRLLVGTGKYGSNNILPEVIKESGSEIITMALRRVDLDNKQENILTYIPKEMTILPNTSGATNAEEAVRIARISRKMGCGDFIKIEVISDTRYLLPDNEETIKATKILADEGFIVLPYMTPDLYAGRRLIEANAAAVMPLGAPIGSNRGLQMKEMIRIMIDELDIPIIVDAGIGKPSQAMEAMEMGADAVLVNTAIASAGDPVQMARAFKLAVEGGREAYIAKTGNVSEFANASSPLTGFLGNL</sequence>
<accession>Q186R1</accession>
<protein>
    <recommendedName>
        <fullName evidence="1">Thiazole synthase</fullName>
        <ecNumber evidence="1">2.8.1.10</ecNumber>
    </recommendedName>
</protein>
<name>THIG_CLOD6</name>
<dbReference type="EC" id="2.8.1.10" evidence="1"/>
<dbReference type="EMBL" id="AM180355">
    <property type="protein sequence ID" value="CAJ68572.1"/>
    <property type="molecule type" value="Genomic_DNA"/>
</dbReference>
<dbReference type="RefSeq" id="WP_009889636.1">
    <property type="nucleotide sequence ID" value="NZ_JAUPES010000035.1"/>
</dbReference>
<dbReference type="RefSeq" id="YP_001088208.1">
    <property type="nucleotide sequence ID" value="NC_009089.1"/>
</dbReference>
<dbReference type="SMR" id="Q186R1"/>
<dbReference type="STRING" id="272563.CD630_17040"/>
<dbReference type="EnsemblBacteria" id="CAJ68572">
    <property type="protein sequence ID" value="CAJ68572"/>
    <property type="gene ID" value="CD630_17040"/>
</dbReference>
<dbReference type="KEGG" id="cdf:CD630_17040"/>
<dbReference type="KEGG" id="pdc:CDIF630_01892"/>
<dbReference type="PATRIC" id="fig|272563.120.peg.1788"/>
<dbReference type="eggNOG" id="COG2022">
    <property type="taxonomic scope" value="Bacteria"/>
</dbReference>
<dbReference type="OrthoDB" id="9805935at2"/>
<dbReference type="PhylomeDB" id="Q186R1"/>
<dbReference type="BioCyc" id="PDIF272563:G12WB-1847-MONOMER"/>
<dbReference type="UniPathway" id="UPA00060"/>
<dbReference type="Proteomes" id="UP000001978">
    <property type="component" value="Chromosome"/>
</dbReference>
<dbReference type="GO" id="GO:0005737">
    <property type="term" value="C:cytoplasm"/>
    <property type="evidence" value="ECO:0007669"/>
    <property type="project" value="UniProtKB-SubCell"/>
</dbReference>
<dbReference type="GO" id="GO:1990107">
    <property type="term" value="F:thiazole synthase activity"/>
    <property type="evidence" value="ECO:0007669"/>
    <property type="project" value="UniProtKB-EC"/>
</dbReference>
<dbReference type="GO" id="GO:0009229">
    <property type="term" value="P:thiamine diphosphate biosynthetic process"/>
    <property type="evidence" value="ECO:0007669"/>
    <property type="project" value="UniProtKB-UniRule"/>
</dbReference>
<dbReference type="CDD" id="cd04728">
    <property type="entry name" value="ThiG"/>
    <property type="match status" value="1"/>
</dbReference>
<dbReference type="Gene3D" id="3.20.20.70">
    <property type="entry name" value="Aldolase class I"/>
    <property type="match status" value="1"/>
</dbReference>
<dbReference type="HAMAP" id="MF_00443">
    <property type="entry name" value="ThiG"/>
    <property type="match status" value="1"/>
</dbReference>
<dbReference type="InterPro" id="IPR013785">
    <property type="entry name" value="Aldolase_TIM"/>
</dbReference>
<dbReference type="InterPro" id="IPR033983">
    <property type="entry name" value="Thiazole_synthase_ThiG"/>
</dbReference>
<dbReference type="InterPro" id="IPR008867">
    <property type="entry name" value="ThiG"/>
</dbReference>
<dbReference type="PANTHER" id="PTHR34266">
    <property type="entry name" value="THIAZOLE SYNTHASE"/>
    <property type="match status" value="1"/>
</dbReference>
<dbReference type="PANTHER" id="PTHR34266:SF2">
    <property type="entry name" value="THIAZOLE SYNTHASE"/>
    <property type="match status" value="1"/>
</dbReference>
<dbReference type="Pfam" id="PF05690">
    <property type="entry name" value="ThiG"/>
    <property type="match status" value="1"/>
</dbReference>
<dbReference type="SUPFAM" id="SSF110399">
    <property type="entry name" value="ThiG-like"/>
    <property type="match status" value="1"/>
</dbReference>
<feature type="chain" id="PRO_1000026000" description="Thiazole synthase">
    <location>
        <begin position="1"/>
        <end position="256"/>
    </location>
</feature>
<feature type="active site" description="Schiff-base intermediate with DXP" evidence="1">
    <location>
        <position position="96"/>
    </location>
</feature>
<feature type="binding site" evidence="1">
    <location>
        <position position="157"/>
    </location>
    <ligand>
        <name>1-deoxy-D-xylulose 5-phosphate</name>
        <dbReference type="ChEBI" id="CHEBI:57792"/>
    </ligand>
</feature>
<feature type="binding site" evidence="1">
    <location>
        <begin position="183"/>
        <end position="184"/>
    </location>
    <ligand>
        <name>1-deoxy-D-xylulose 5-phosphate</name>
        <dbReference type="ChEBI" id="CHEBI:57792"/>
    </ligand>
</feature>
<feature type="binding site" evidence="1">
    <location>
        <begin position="205"/>
        <end position="206"/>
    </location>
    <ligand>
        <name>1-deoxy-D-xylulose 5-phosphate</name>
        <dbReference type="ChEBI" id="CHEBI:57792"/>
    </ligand>
</feature>
<organism>
    <name type="scientific">Clostridioides difficile (strain 630)</name>
    <name type="common">Peptoclostridium difficile</name>
    <dbReference type="NCBI Taxonomy" id="272563"/>
    <lineage>
        <taxon>Bacteria</taxon>
        <taxon>Bacillati</taxon>
        <taxon>Bacillota</taxon>
        <taxon>Clostridia</taxon>
        <taxon>Peptostreptococcales</taxon>
        <taxon>Peptostreptococcaceae</taxon>
        <taxon>Clostridioides</taxon>
    </lineage>
</organism>
<gene>
    <name evidence="1" type="primary">thiG</name>
    <name type="ordered locus">CD630_17040</name>
</gene>